<comment type="function">
    <text evidence="1">Could be a nuclease involved in processing of the 5'-end of pre-16S rRNA.</text>
</comment>
<comment type="subcellular location">
    <subcellularLocation>
        <location evidence="1">Cytoplasm</location>
    </subcellularLocation>
</comment>
<comment type="similarity">
    <text evidence="1">Belongs to the YqgF nuclease family.</text>
</comment>
<comment type="sequence caution" evidence="2">
    <conflict type="erroneous initiation">
        <sequence resource="EMBL-CDS" id="BAB42708"/>
    </conflict>
    <text>Truncated N-terminus.</text>
</comment>
<keyword id="KW-0963">Cytoplasm</keyword>
<keyword id="KW-0378">Hydrolase</keyword>
<keyword id="KW-0540">Nuclease</keyword>
<keyword id="KW-0690">Ribosome biogenesis</keyword>
<accession>P67490</accession>
<accession>Q8NW88</accession>
<accession>Q99TN3</accession>
<evidence type="ECO:0000255" key="1">
    <source>
        <dbReference type="HAMAP-Rule" id="MF_00651"/>
    </source>
</evidence>
<evidence type="ECO:0000305" key="2"/>
<dbReference type="EC" id="3.1.-.-" evidence="1"/>
<dbReference type="EMBL" id="BA000018">
    <property type="protein sequence ID" value="BAB42708.1"/>
    <property type="status" value="ALT_INIT"/>
    <property type="molecule type" value="Genomic_DNA"/>
</dbReference>
<dbReference type="PIR" id="G89943">
    <property type="entry name" value="G89943"/>
</dbReference>
<dbReference type="SMR" id="P67490"/>
<dbReference type="EnsemblBacteria" id="BAB42708">
    <property type="protein sequence ID" value="BAB42708"/>
    <property type="gene ID" value="BAB42708"/>
</dbReference>
<dbReference type="KEGG" id="sau:SA1444"/>
<dbReference type="HOGENOM" id="CLU_098240_2_0_9"/>
<dbReference type="GO" id="GO:0005829">
    <property type="term" value="C:cytosol"/>
    <property type="evidence" value="ECO:0007669"/>
    <property type="project" value="TreeGrafter"/>
</dbReference>
<dbReference type="GO" id="GO:0004518">
    <property type="term" value="F:nuclease activity"/>
    <property type="evidence" value="ECO:0007669"/>
    <property type="project" value="UniProtKB-KW"/>
</dbReference>
<dbReference type="GO" id="GO:0000967">
    <property type="term" value="P:rRNA 5'-end processing"/>
    <property type="evidence" value="ECO:0007669"/>
    <property type="project" value="UniProtKB-UniRule"/>
</dbReference>
<dbReference type="CDD" id="cd16964">
    <property type="entry name" value="YqgF"/>
    <property type="match status" value="1"/>
</dbReference>
<dbReference type="FunFam" id="3.30.420.140:FF:000003">
    <property type="entry name" value="Putative pre-16S rRNA nuclease"/>
    <property type="match status" value="1"/>
</dbReference>
<dbReference type="Gene3D" id="3.30.420.140">
    <property type="entry name" value="YqgF/RNase H-like domain"/>
    <property type="match status" value="1"/>
</dbReference>
<dbReference type="HAMAP" id="MF_00651">
    <property type="entry name" value="Nuclease_YqgF"/>
    <property type="match status" value="1"/>
</dbReference>
<dbReference type="InterPro" id="IPR012337">
    <property type="entry name" value="RNaseH-like_sf"/>
</dbReference>
<dbReference type="InterPro" id="IPR005227">
    <property type="entry name" value="YqgF"/>
</dbReference>
<dbReference type="InterPro" id="IPR006641">
    <property type="entry name" value="YqgF/RNaseH-like_dom"/>
</dbReference>
<dbReference type="InterPro" id="IPR037027">
    <property type="entry name" value="YqgF/RNaseH-like_dom_sf"/>
</dbReference>
<dbReference type="NCBIfam" id="TIGR00250">
    <property type="entry name" value="RNAse_H_YqgF"/>
    <property type="match status" value="1"/>
</dbReference>
<dbReference type="PANTHER" id="PTHR33317">
    <property type="entry name" value="POLYNUCLEOTIDYL TRANSFERASE, RIBONUCLEASE H-LIKE SUPERFAMILY PROTEIN"/>
    <property type="match status" value="1"/>
</dbReference>
<dbReference type="PANTHER" id="PTHR33317:SF4">
    <property type="entry name" value="POLYNUCLEOTIDYL TRANSFERASE, RIBONUCLEASE H-LIKE SUPERFAMILY PROTEIN"/>
    <property type="match status" value="1"/>
</dbReference>
<dbReference type="Pfam" id="PF03652">
    <property type="entry name" value="RuvX"/>
    <property type="match status" value="1"/>
</dbReference>
<dbReference type="SMART" id="SM00732">
    <property type="entry name" value="YqgFc"/>
    <property type="match status" value="1"/>
</dbReference>
<dbReference type="SUPFAM" id="SSF53098">
    <property type="entry name" value="Ribonuclease H-like"/>
    <property type="match status" value="1"/>
</dbReference>
<organism>
    <name type="scientific">Staphylococcus aureus (strain N315)</name>
    <dbReference type="NCBI Taxonomy" id="158879"/>
    <lineage>
        <taxon>Bacteria</taxon>
        <taxon>Bacillati</taxon>
        <taxon>Bacillota</taxon>
        <taxon>Bacilli</taxon>
        <taxon>Bacillales</taxon>
        <taxon>Staphylococcaceae</taxon>
        <taxon>Staphylococcus</taxon>
    </lineage>
</organism>
<proteinExistence type="inferred from homology"/>
<feature type="chain" id="PRO_0000172139" description="Putative pre-16S rRNA nuclease">
    <location>
        <begin position="1"/>
        <end position="142"/>
    </location>
</feature>
<gene>
    <name type="ordered locus">SA1444</name>
</gene>
<reference key="1">
    <citation type="journal article" date="2001" name="Lancet">
        <title>Whole genome sequencing of meticillin-resistant Staphylococcus aureus.</title>
        <authorList>
            <person name="Kuroda M."/>
            <person name="Ohta T."/>
            <person name="Uchiyama I."/>
            <person name="Baba T."/>
            <person name="Yuzawa H."/>
            <person name="Kobayashi I."/>
            <person name="Cui L."/>
            <person name="Oguchi A."/>
            <person name="Aoki K."/>
            <person name="Nagai Y."/>
            <person name="Lian J.-Q."/>
            <person name="Ito T."/>
            <person name="Kanamori M."/>
            <person name="Matsumaru H."/>
            <person name="Maruyama A."/>
            <person name="Murakami H."/>
            <person name="Hosoyama A."/>
            <person name="Mizutani-Ui Y."/>
            <person name="Takahashi N.K."/>
            <person name="Sawano T."/>
            <person name="Inoue R."/>
            <person name="Kaito C."/>
            <person name="Sekimizu K."/>
            <person name="Hirakawa H."/>
            <person name="Kuhara S."/>
            <person name="Goto S."/>
            <person name="Yabuzaki J."/>
            <person name="Kanehisa M."/>
            <person name="Yamashita A."/>
            <person name="Oshima K."/>
            <person name="Furuya K."/>
            <person name="Yoshino C."/>
            <person name="Shiba T."/>
            <person name="Hattori M."/>
            <person name="Ogasawara N."/>
            <person name="Hayashi H."/>
            <person name="Hiramatsu K."/>
        </authorList>
    </citation>
    <scope>NUCLEOTIDE SEQUENCE [LARGE SCALE GENOMIC DNA]</scope>
    <source>
        <strain>N315</strain>
    </source>
</reference>
<name>YQGF_STAAN</name>
<sequence length="142" mass="15865">MLQHKILGLDVGSRTVGIAISDIMGWTAQGLDTLRINEENNELGIDQLVDIIKKHNVGTVVIGLPKNMNNSIGFRGEASLTYKEKLLEAYPSIEIVMWDERLSTMAAERSLLEADVSRQKRKQVIDKMAAVFILQGYLDSLH</sequence>
<protein>
    <recommendedName>
        <fullName evidence="1">Putative pre-16S rRNA nuclease</fullName>
        <ecNumber evidence="1">3.1.-.-</ecNumber>
    </recommendedName>
</protein>